<dbReference type="EC" id="5.4.2.10" evidence="1"/>
<dbReference type="EMBL" id="AL591688">
    <property type="protein sequence ID" value="CAC47313.1"/>
    <property type="molecule type" value="Genomic_DNA"/>
</dbReference>
<dbReference type="RefSeq" id="NP_386840.1">
    <property type="nucleotide sequence ID" value="NC_003047.1"/>
</dbReference>
<dbReference type="RefSeq" id="WP_003527581.1">
    <property type="nucleotide sequence ID" value="NC_003047.1"/>
</dbReference>
<dbReference type="SMR" id="Q92M99"/>
<dbReference type="EnsemblBacteria" id="CAC47313">
    <property type="protein sequence ID" value="CAC47313"/>
    <property type="gene ID" value="SMc00637"/>
</dbReference>
<dbReference type="GeneID" id="89577148"/>
<dbReference type="KEGG" id="sme:SMc00637"/>
<dbReference type="PATRIC" id="fig|266834.11.peg.4241"/>
<dbReference type="eggNOG" id="COG1109">
    <property type="taxonomic scope" value="Bacteria"/>
</dbReference>
<dbReference type="HOGENOM" id="CLU_016950_7_0_5"/>
<dbReference type="OrthoDB" id="9803322at2"/>
<dbReference type="Proteomes" id="UP000001976">
    <property type="component" value="Chromosome"/>
</dbReference>
<dbReference type="GO" id="GO:0005829">
    <property type="term" value="C:cytosol"/>
    <property type="evidence" value="ECO:0007669"/>
    <property type="project" value="TreeGrafter"/>
</dbReference>
<dbReference type="GO" id="GO:0000287">
    <property type="term" value="F:magnesium ion binding"/>
    <property type="evidence" value="ECO:0007669"/>
    <property type="project" value="UniProtKB-UniRule"/>
</dbReference>
<dbReference type="GO" id="GO:0008966">
    <property type="term" value="F:phosphoglucosamine mutase activity"/>
    <property type="evidence" value="ECO:0007669"/>
    <property type="project" value="UniProtKB-UniRule"/>
</dbReference>
<dbReference type="GO" id="GO:0004615">
    <property type="term" value="F:phosphomannomutase activity"/>
    <property type="evidence" value="ECO:0007669"/>
    <property type="project" value="TreeGrafter"/>
</dbReference>
<dbReference type="GO" id="GO:0005975">
    <property type="term" value="P:carbohydrate metabolic process"/>
    <property type="evidence" value="ECO:0007669"/>
    <property type="project" value="InterPro"/>
</dbReference>
<dbReference type="GO" id="GO:0009252">
    <property type="term" value="P:peptidoglycan biosynthetic process"/>
    <property type="evidence" value="ECO:0007669"/>
    <property type="project" value="TreeGrafter"/>
</dbReference>
<dbReference type="GO" id="GO:0006048">
    <property type="term" value="P:UDP-N-acetylglucosamine biosynthetic process"/>
    <property type="evidence" value="ECO:0007669"/>
    <property type="project" value="TreeGrafter"/>
</dbReference>
<dbReference type="CDD" id="cd05802">
    <property type="entry name" value="GlmM"/>
    <property type="match status" value="1"/>
</dbReference>
<dbReference type="FunFam" id="3.30.310.50:FF:000001">
    <property type="entry name" value="Phosphoglucosamine mutase"/>
    <property type="match status" value="1"/>
</dbReference>
<dbReference type="FunFam" id="3.40.120.10:FF:000001">
    <property type="entry name" value="Phosphoglucosamine mutase"/>
    <property type="match status" value="1"/>
</dbReference>
<dbReference type="FunFam" id="3.40.120.10:FF:000003">
    <property type="entry name" value="Phosphoglucosamine mutase"/>
    <property type="match status" value="1"/>
</dbReference>
<dbReference type="Gene3D" id="3.40.120.10">
    <property type="entry name" value="Alpha-D-Glucose-1,6-Bisphosphate, subunit A, domain 3"/>
    <property type="match status" value="3"/>
</dbReference>
<dbReference type="Gene3D" id="3.30.310.50">
    <property type="entry name" value="Alpha-D-phosphohexomutase, C-terminal domain"/>
    <property type="match status" value="1"/>
</dbReference>
<dbReference type="HAMAP" id="MF_01554_B">
    <property type="entry name" value="GlmM_B"/>
    <property type="match status" value="1"/>
</dbReference>
<dbReference type="InterPro" id="IPR005844">
    <property type="entry name" value="A-D-PHexomutase_a/b/a-I"/>
</dbReference>
<dbReference type="InterPro" id="IPR016055">
    <property type="entry name" value="A-D-PHexomutase_a/b/a-I/II/III"/>
</dbReference>
<dbReference type="InterPro" id="IPR005845">
    <property type="entry name" value="A-D-PHexomutase_a/b/a-II"/>
</dbReference>
<dbReference type="InterPro" id="IPR005846">
    <property type="entry name" value="A-D-PHexomutase_a/b/a-III"/>
</dbReference>
<dbReference type="InterPro" id="IPR005843">
    <property type="entry name" value="A-D-PHexomutase_C"/>
</dbReference>
<dbReference type="InterPro" id="IPR036900">
    <property type="entry name" value="A-D-PHexomutase_C_sf"/>
</dbReference>
<dbReference type="InterPro" id="IPR005841">
    <property type="entry name" value="Alpha-D-phosphohexomutase_SF"/>
</dbReference>
<dbReference type="InterPro" id="IPR006352">
    <property type="entry name" value="GlmM_bact"/>
</dbReference>
<dbReference type="InterPro" id="IPR050060">
    <property type="entry name" value="Phosphoglucosamine_mutase"/>
</dbReference>
<dbReference type="NCBIfam" id="TIGR01455">
    <property type="entry name" value="glmM"/>
    <property type="match status" value="1"/>
</dbReference>
<dbReference type="NCBIfam" id="NF008139">
    <property type="entry name" value="PRK10887.1"/>
    <property type="match status" value="1"/>
</dbReference>
<dbReference type="PANTHER" id="PTHR42946:SF1">
    <property type="entry name" value="PHOSPHOGLUCOMUTASE (ALPHA-D-GLUCOSE-1,6-BISPHOSPHATE-DEPENDENT)"/>
    <property type="match status" value="1"/>
</dbReference>
<dbReference type="PANTHER" id="PTHR42946">
    <property type="entry name" value="PHOSPHOHEXOSE MUTASE"/>
    <property type="match status" value="1"/>
</dbReference>
<dbReference type="Pfam" id="PF02878">
    <property type="entry name" value="PGM_PMM_I"/>
    <property type="match status" value="1"/>
</dbReference>
<dbReference type="Pfam" id="PF02879">
    <property type="entry name" value="PGM_PMM_II"/>
    <property type="match status" value="1"/>
</dbReference>
<dbReference type="Pfam" id="PF02880">
    <property type="entry name" value="PGM_PMM_III"/>
    <property type="match status" value="1"/>
</dbReference>
<dbReference type="Pfam" id="PF00408">
    <property type="entry name" value="PGM_PMM_IV"/>
    <property type="match status" value="1"/>
</dbReference>
<dbReference type="PRINTS" id="PR00509">
    <property type="entry name" value="PGMPMM"/>
</dbReference>
<dbReference type="SUPFAM" id="SSF55957">
    <property type="entry name" value="Phosphoglucomutase, C-terminal domain"/>
    <property type="match status" value="1"/>
</dbReference>
<dbReference type="SUPFAM" id="SSF53738">
    <property type="entry name" value="Phosphoglucomutase, first 3 domains"/>
    <property type="match status" value="3"/>
</dbReference>
<name>GLMM_RHIME</name>
<reference key="1">
    <citation type="journal article" date="2001" name="Proc. Natl. Acad. Sci. U.S.A.">
        <title>Analysis of the chromosome sequence of the legume symbiont Sinorhizobium meliloti strain 1021.</title>
        <authorList>
            <person name="Capela D."/>
            <person name="Barloy-Hubler F."/>
            <person name="Gouzy J."/>
            <person name="Bothe G."/>
            <person name="Ampe F."/>
            <person name="Batut J."/>
            <person name="Boistard P."/>
            <person name="Becker A."/>
            <person name="Boutry M."/>
            <person name="Cadieu E."/>
            <person name="Dreano S."/>
            <person name="Gloux S."/>
            <person name="Godrie T."/>
            <person name="Goffeau A."/>
            <person name="Kahn D."/>
            <person name="Kiss E."/>
            <person name="Lelaure V."/>
            <person name="Masuy D."/>
            <person name="Pohl T."/>
            <person name="Portetelle D."/>
            <person name="Puehler A."/>
            <person name="Purnelle B."/>
            <person name="Ramsperger U."/>
            <person name="Renard C."/>
            <person name="Thebault P."/>
            <person name="Vandenbol M."/>
            <person name="Weidner S."/>
            <person name="Galibert F."/>
        </authorList>
    </citation>
    <scope>NUCLEOTIDE SEQUENCE [LARGE SCALE GENOMIC DNA]</scope>
    <source>
        <strain>1021</strain>
    </source>
</reference>
<reference key="2">
    <citation type="journal article" date="2001" name="Science">
        <title>The composite genome of the legume symbiont Sinorhizobium meliloti.</title>
        <authorList>
            <person name="Galibert F."/>
            <person name="Finan T.M."/>
            <person name="Long S.R."/>
            <person name="Puehler A."/>
            <person name="Abola P."/>
            <person name="Ampe F."/>
            <person name="Barloy-Hubler F."/>
            <person name="Barnett M.J."/>
            <person name="Becker A."/>
            <person name="Boistard P."/>
            <person name="Bothe G."/>
            <person name="Boutry M."/>
            <person name="Bowser L."/>
            <person name="Buhrmester J."/>
            <person name="Cadieu E."/>
            <person name="Capela D."/>
            <person name="Chain P."/>
            <person name="Cowie A."/>
            <person name="Davis R.W."/>
            <person name="Dreano S."/>
            <person name="Federspiel N.A."/>
            <person name="Fisher R.F."/>
            <person name="Gloux S."/>
            <person name="Godrie T."/>
            <person name="Goffeau A."/>
            <person name="Golding B."/>
            <person name="Gouzy J."/>
            <person name="Gurjal M."/>
            <person name="Hernandez-Lucas I."/>
            <person name="Hong A."/>
            <person name="Huizar L."/>
            <person name="Hyman R.W."/>
            <person name="Jones T."/>
            <person name="Kahn D."/>
            <person name="Kahn M.L."/>
            <person name="Kalman S."/>
            <person name="Keating D.H."/>
            <person name="Kiss E."/>
            <person name="Komp C."/>
            <person name="Lelaure V."/>
            <person name="Masuy D."/>
            <person name="Palm C."/>
            <person name="Peck M.C."/>
            <person name="Pohl T.M."/>
            <person name="Portetelle D."/>
            <person name="Purnelle B."/>
            <person name="Ramsperger U."/>
            <person name="Surzycki R."/>
            <person name="Thebault P."/>
            <person name="Vandenbol M."/>
            <person name="Vorhoelter F.J."/>
            <person name="Weidner S."/>
            <person name="Wells D.H."/>
            <person name="Wong K."/>
            <person name="Yeh K.-C."/>
            <person name="Batut J."/>
        </authorList>
    </citation>
    <scope>NUCLEOTIDE SEQUENCE [LARGE SCALE GENOMIC DNA]</scope>
    <source>
        <strain>1021</strain>
    </source>
</reference>
<comment type="function">
    <text evidence="1">Catalyzes the conversion of glucosamine-6-phosphate to glucosamine-1-phosphate.</text>
</comment>
<comment type="catalytic activity">
    <reaction evidence="1">
        <text>alpha-D-glucosamine 1-phosphate = D-glucosamine 6-phosphate</text>
        <dbReference type="Rhea" id="RHEA:23424"/>
        <dbReference type="ChEBI" id="CHEBI:58516"/>
        <dbReference type="ChEBI" id="CHEBI:58725"/>
        <dbReference type="EC" id="5.4.2.10"/>
    </reaction>
</comment>
<comment type="cofactor">
    <cofactor evidence="1">
        <name>Mg(2+)</name>
        <dbReference type="ChEBI" id="CHEBI:18420"/>
    </cofactor>
    <text evidence="1">Binds 1 Mg(2+) ion per subunit.</text>
</comment>
<comment type="PTM">
    <text evidence="1">Activated by phosphorylation.</text>
</comment>
<comment type="similarity">
    <text evidence="1">Belongs to the phosphohexose mutase family.</text>
</comment>
<evidence type="ECO:0000255" key="1">
    <source>
        <dbReference type="HAMAP-Rule" id="MF_01554"/>
    </source>
</evidence>
<sequence>MKRRYFGTDGIRGQSNIFPMTPDLAMRVGIAVGTIFRNGAHRHRVVIGKDTRLSGYMLENAMVAGFTAAGLDVFLLGPIPTPGVAMLTRSLRADIGVMISASHNAFRDNGIKLFGPDGYKLSDDIEQKIEDLLEQDMSGQLAKPEDIGRAKRVDGDIYRYIEQAKRTLPRDVTLKGLRIAIDCANGAAYKVAPSALWELGAEVVTIGTEPNGVNINLECGSTHPAALQKKVHEVRADIGIALDGDADRVLIVDEEGAVIDGDQLMAVIADSWAADGMLKGGGIAATVMSNLGLERYLQARRLKLHRTKVGDRYVVEQMRQDGLNVGGEQSGHIVLSDFGTTGDGLVAALQILAVVKRQGKTVSEICRRFEPVPQVLKNVRVSAGKPLEDAAVQQAIAEAEAQLAKNGRLLIRPSGTEPLIRVMAEGDDRGQVERIVDELVNVIGGVRNAA</sequence>
<organism>
    <name type="scientific">Rhizobium meliloti (strain 1021)</name>
    <name type="common">Ensifer meliloti</name>
    <name type="synonym">Sinorhizobium meliloti</name>
    <dbReference type="NCBI Taxonomy" id="266834"/>
    <lineage>
        <taxon>Bacteria</taxon>
        <taxon>Pseudomonadati</taxon>
        <taxon>Pseudomonadota</taxon>
        <taxon>Alphaproteobacteria</taxon>
        <taxon>Hyphomicrobiales</taxon>
        <taxon>Rhizobiaceae</taxon>
        <taxon>Sinorhizobium/Ensifer group</taxon>
        <taxon>Sinorhizobium</taxon>
    </lineage>
</organism>
<accession>Q92M99</accession>
<protein>
    <recommendedName>
        <fullName evidence="1">Phosphoglucosamine mutase</fullName>
        <ecNumber evidence="1">5.4.2.10</ecNumber>
    </recommendedName>
</protein>
<gene>
    <name evidence="1" type="primary">glmM</name>
    <name type="ordered locus">R02734</name>
    <name type="ORF">SMc00637</name>
</gene>
<keyword id="KW-0413">Isomerase</keyword>
<keyword id="KW-0460">Magnesium</keyword>
<keyword id="KW-0479">Metal-binding</keyword>
<keyword id="KW-0597">Phosphoprotein</keyword>
<keyword id="KW-1185">Reference proteome</keyword>
<proteinExistence type="inferred from homology"/>
<feature type="chain" id="PRO_0000147948" description="Phosphoglucosamine mutase">
    <location>
        <begin position="1"/>
        <end position="450"/>
    </location>
</feature>
<feature type="active site" description="Phosphoserine intermediate" evidence="1">
    <location>
        <position position="102"/>
    </location>
</feature>
<feature type="binding site" description="via phosphate group" evidence="1">
    <location>
        <position position="102"/>
    </location>
    <ligand>
        <name>Mg(2+)</name>
        <dbReference type="ChEBI" id="CHEBI:18420"/>
    </ligand>
</feature>
<feature type="binding site" evidence="1">
    <location>
        <position position="243"/>
    </location>
    <ligand>
        <name>Mg(2+)</name>
        <dbReference type="ChEBI" id="CHEBI:18420"/>
    </ligand>
</feature>
<feature type="binding site" evidence="1">
    <location>
        <position position="245"/>
    </location>
    <ligand>
        <name>Mg(2+)</name>
        <dbReference type="ChEBI" id="CHEBI:18420"/>
    </ligand>
</feature>
<feature type="binding site" evidence="1">
    <location>
        <position position="247"/>
    </location>
    <ligand>
        <name>Mg(2+)</name>
        <dbReference type="ChEBI" id="CHEBI:18420"/>
    </ligand>
</feature>
<feature type="modified residue" description="Phosphoserine" evidence="1">
    <location>
        <position position="102"/>
    </location>
</feature>